<accession>Q8Y3X6</accession>
<evidence type="ECO:0000255" key="1">
    <source>
        <dbReference type="HAMAP-Rule" id="MF_00274"/>
    </source>
</evidence>
<evidence type="ECO:0000256" key="2">
    <source>
        <dbReference type="SAM" id="MobiDB-lite"/>
    </source>
</evidence>
<sequence>MRGMGNMQGMMKQMQKMQKEMAKAQADLEAQEFTGTAGGGMVTVKATGKRVITDVVINEEVVDPEDIEMLQDLVLAATNDVLKQIEDTTSQTMGKFTQGLNIPGM</sequence>
<comment type="function">
    <text evidence="1">Binds to DNA and alters its conformation. May be involved in regulation of gene expression, nucleoid organization and DNA protection.</text>
</comment>
<comment type="subunit">
    <text evidence="1">Homodimer.</text>
</comment>
<comment type="subcellular location">
    <subcellularLocation>
        <location evidence="1">Cytoplasm</location>
        <location evidence="1">Nucleoid</location>
    </subcellularLocation>
</comment>
<comment type="similarity">
    <text evidence="1">Belongs to the YbaB/EbfC family.</text>
</comment>
<feature type="chain" id="PRO_0000170407" description="Nucleoid-associated protein lmo2703">
    <location>
        <begin position="1"/>
        <end position="105"/>
    </location>
</feature>
<feature type="region of interest" description="Disordered" evidence="2">
    <location>
        <begin position="1"/>
        <end position="23"/>
    </location>
</feature>
<feature type="compositionally biased region" description="Low complexity" evidence="2">
    <location>
        <begin position="1"/>
        <end position="16"/>
    </location>
</feature>
<proteinExistence type="inferred from homology"/>
<protein>
    <recommendedName>
        <fullName evidence="1">Nucleoid-associated protein lmo2703</fullName>
    </recommendedName>
</protein>
<gene>
    <name type="ordered locus">lmo2703</name>
</gene>
<name>Y2703_LISMO</name>
<reference key="1">
    <citation type="journal article" date="2001" name="Science">
        <title>Comparative genomics of Listeria species.</title>
        <authorList>
            <person name="Glaser P."/>
            <person name="Frangeul L."/>
            <person name="Buchrieser C."/>
            <person name="Rusniok C."/>
            <person name="Amend A."/>
            <person name="Baquero F."/>
            <person name="Berche P."/>
            <person name="Bloecker H."/>
            <person name="Brandt P."/>
            <person name="Chakraborty T."/>
            <person name="Charbit A."/>
            <person name="Chetouani F."/>
            <person name="Couve E."/>
            <person name="de Daruvar A."/>
            <person name="Dehoux P."/>
            <person name="Domann E."/>
            <person name="Dominguez-Bernal G."/>
            <person name="Duchaud E."/>
            <person name="Durant L."/>
            <person name="Dussurget O."/>
            <person name="Entian K.-D."/>
            <person name="Fsihi H."/>
            <person name="Garcia-del Portillo F."/>
            <person name="Garrido P."/>
            <person name="Gautier L."/>
            <person name="Goebel W."/>
            <person name="Gomez-Lopez N."/>
            <person name="Hain T."/>
            <person name="Hauf J."/>
            <person name="Jackson D."/>
            <person name="Jones L.-M."/>
            <person name="Kaerst U."/>
            <person name="Kreft J."/>
            <person name="Kuhn M."/>
            <person name="Kunst F."/>
            <person name="Kurapkat G."/>
            <person name="Madueno E."/>
            <person name="Maitournam A."/>
            <person name="Mata Vicente J."/>
            <person name="Ng E."/>
            <person name="Nedjari H."/>
            <person name="Nordsiek G."/>
            <person name="Novella S."/>
            <person name="de Pablos B."/>
            <person name="Perez-Diaz J.-C."/>
            <person name="Purcell R."/>
            <person name="Remmel B."/>
            <person name="Rose M."/>
            <person name="Schlueter T."/>
            <person name="Simoes N."/>
            <person name="Tierrez A."/>
            <person name="Vazquez-Boland J.-A."/>
            <person name="Voss H."/>
            <person name="Wehland J."/>
            <person name="Cossart P."/>
        </authorList>
    </citation>
    <scope>NUCLEOTIDE SEQUENCE [LARGE SCALE GENOMIC DNA]</scope>
    <source>
        <strain>ATCC BAA-679 / EGD-e</strain>
    </source>
</reference>
<dbReference type="EMBL" id="AL591984">
    <property type="protein sequence ID" value="CAD00916.1"/>
    <property type="molecule type" value="Genomic_DNA"/>
</dbReference>
<dbReference type="PIR" id="AF1412">
    <property type="entry name" value="AF1412"/>
</dbReference>
<dbReference type="RefSeq" id="NP_466225.1">
    <property type="nucleotide sequence ID" value="NC_003210.1"/>
</dbReference>
<dbReference type="RefSeq" id="WP_003722063.1">
    <property type="nucleotide sequence ID" value="NZ_CP149495.1"/>
</dbReference>
<dbReference type="SMR" id="Q8Y3X6"/>
<dbReference type="STRING" id="169963.gene:17595420"/>
<dbReference type="PaxDb" id="169963-lmo2703"/>
<dbReference type="EnsemblBacteria" id="CAD00916">
    <property type="protein sequence ID" value="CAD00916"/>
    <property type="gene ID" value="CAD00916"/>
</dbReference>
<dbReference type="GeneID" id="987117"/>
<dbReference type="KEGG" id="lmo:lmo2703"/>
<dbReference type="PATRIC" id="fig|169963.11.peg.2769"/>
<dbReference type="eggNOG" id="COG0718">
    <property type="taxonomic scope" value="Bacteria"/>
</dbReference>
<dbReference type="HOGENOM" id="CLU_140930_1_0_9"/>
<dbReference type="OrthoDB" id="9795263at2"/>
<dbReference type="PhylomeDB" id="Q8Y3X6"/>
<dbReference type="BioCyc" id="LMON169963:LMO2703-MONOMER"/>
<dbReference type="Proteomes" id="UP000000817">
    <property type="component" value="Chromosome"/>
</dbReference>
<dbReference type="GO" id="GO:0043590">
    <property type="term" value="C:bacterial nucleoid"/>
    <property type="evidence" value="ECO:0007669"/>
    <property type="project" value="UniProtKB-UniRule"/>
</dbReference>
<dbReference type="GO" id="GO:0005829">
    <property type="term" value="C:cytosol"/>
    <property type="evidence" value="ECO:0000318"/>
    <property type="project" value="GO_Central"/>
</dbReference>
<dbReference type="GO" id="GO:0003677">
    <property type="term" value="F:DNA binding"/>
    <property type="evidence" value="ECO:0000318"/>
    <property type="project" value="GO_Central"/>
</dbReference>
<dbReference type="FunFam" id="3.30.1310.10:FF:000002">
    <property type="entry name" value="Nucleoid-associated protein IKC_06587"/>
    <property type="match status" value="1"/>
</dbReference>
<dbReference type="Gene3D" id="3.30.1310.10">
    <property type="entry name" value="Nucleoid-associated protein YbaB-like domain"/>
    <property type="match status" value="1"/>
</dbReference>
<dbReference type="HAMAP" id="MF_00274">
    <property type="entry name" value="DNA_YbaB_EbfC"/>
    <property type="match status" value="1"/>
</dbReference>
<dbReference type="InterPro" id="IPR036894">
    <property type="entry name" value="YbaB-like_sf"/>
</dbReference>
<dbReference type="InterPro" id="IPR004401">
    <property type="entry name" value="YbaB/EbfC"/>
</dbReference>
<dbReference type="NCBIfam" id="TIGR00103">
    <property type="entry name" value="DNA_YbaB_EbfC"/>
    <property type="match status" value="1"/>
</dbReference>
<dbReference type="PANTHER" id="PTHR33449">
    <property type="entry name" value="NUCLEOID-ASSOCIATED PROTEIN YBAB"/>
    <property type="match status" value="1"/>
</dbReference>
<dbReference type="PANTHER" id="PTHR33449:SF1">
    <property type="entry name" value="NUCLEOID-ASSOCIATED PROTEIN YBAB"/>
    <property type="match status" value="1"/>
</dbReference>
<dbReference type="Pfam" id="PF02575">
    <property type="entry name" value="YbaB_DNA_bd"/>
    <property type="match status" value="1"/>
</dbReference>
<dbReference type="PIRSF" id="PIRSF004555">
    <property type="entry name" value="UCP004555"/>
    <property type="match status" value="1"/>
</dbReference>
<dbReference type="SUPFAM" id="SSF82607">
    <property type="entry name" value="YbaB-like"/>
    <property type="match status" value="1"/>
</dbReference>
<organism>
    <name type="scientific">Listeria monocytogenes serovar 1/2a (strain ATCC BAA-679 / EGD-e)</name>
    <dbReference type="NCBI Taxonomy" id="169963"/>
    <lineage>
        <taxon>Bacteria</taxon>
        <taxon>Bacillati</taxon>
        <taxon>Bacillota</taxon>
        <taxon>Bacilli</taxon>
        <taxon>Bacillales</taxon>
        <taxon>Listeriaceae</taxon>
        <taxon>Listeria</taxon>
    </lineage>
</organism>
<keyword id="KW-0963">Cytoplasm</keyword>
<keyword id="KW-0238">DNA-binding</keyword>
<keyword id="KW-1185">Reference proteome</keyword>